<proteinExistence type="evidence at transcript level"/>
<accession>Q80XA0</accession>
<accession>Q8R3W8</accession>
<accession>Q8R4A5</accession>
<name>TM121_MOUSE</name>
<dbReference type="EMBL" id="AF488729">
    <property type="protein sequence ID" value="AAM08319.1"/>
    <property type="molecule type" value="mRNA"/>
</dbReference>
<dbReference type="EMBL" id="BC023493">
    <property type="protein sequence ID" value="AAH23493.1"/>
    <property type="molecule type" value="mRNA"/>
</dbReference>
<dbReference type="EMBL" id="BC043474">
    <property type="protein sequence ID" value="AAH43474.1"/>
    <property type="molecule type" value="mRNA"/>
</dbReference>
<dbReference type="CCDS" id="CCDS26206.1"/>
<dbReference type="RefSeq" id="NP_722471.2">
    <property type="nucleotide sequence ID" value="NM_153776.2"/>
</dbReference>
<dbReference type="RefSeq" id="XP_006516264.1">
    <property type="nucleotide sequence ID" value="XM_006516201.5"/>
</dbReference>
<dbReference type="FunCoup" id="Q80XA0">
    <property type="interactions" value="12"/>
</dbReference>
<dbReference type="STRING" id="10090.ENSMUSP00000055994"/>
<dbReference type="iPTMnet" id="Q80XA0"/>
<dbReference type="PhosphoSitePlus" id="Q80XA0"/>
<dbReference type="PaxDb" id="10090-ENSMUSP00000055994"/>
<dbReference type="ProteomicsDB" id="259218"/>
<dbReference type="Antibodypedia" id="62348">
    <property type="antibodies" value="17 antibodies from 9 providers"/>
</dbReference>
<dbReference type="Ensembl" id="ENSMUST00000058491.8">
    <property type="protein sequence ID" value="ENSMUSP00000055994.7"/>
    <property type="gene ID" value="ENSMUSG00000049036.8"/>
</dbReference>
<dbReference type="GeneID" id="69195"/>
<dbReference type="KEGG" id="mmu:69195"/>
<dbReference type="UCSC" id="uc007pgc.1">
    <property type="organism name" value="mouse"/>
</dbReference>
<dbReference type="AGR" id="MGI:1916445"/>
<dbReference type="CTD" id="80757"/>
<dbReference type="MGI" id="MGI:1916445">
    <property type="gene designation" value="Tmem121"/>
</dbReference>
<dbReference type="VEuPathDB" id="HostDB:ENSMUSG00000049036"/>
<dbReference type="eggNOG" id="ENOG502S0WC">
    <property type="taxonomic scope" value="Eukaryota"/>
</dbReference>
<dbReference type="GeneTree" id="ENSGT00390000003866"/>
<dbReference type="HOGENOM" id="CLU_076106_0_0_1"/>
<dbReference type="InParanoid" id="Q80XA0"/>
<dbReference type="OMA" id="QATLWEP"/>
<dbReference type="OrthoDB" id="9926693at2759"/>
<dbReference type="PhylomeDB" id="Q80XA0"/>
<dbReference type="TreeFam" id="TF328726"/>
<dbReference type="BioGRID-ORCS" id="69195">
    <property type="hits" value="5 hits in 77 CRISPR screens"/>
</dbReference>
<dbReference type="PRO" id="PR:Q80XA0"/>
<dbReference type="Proteomes" id="UP000000589">
    <property type="component" value="Chromosome 12"/>
</dbReference>
<dbReference type="RNAct" id="Q80XA0">
    <property type="molecule type" value="protein"/>
</dbReference>
<dbReference type="Bgee" id="ENSMUSG00000049036">
    <property type="expression patterns" value="Expressed in lumbar subsegment of spinal cord and 61 other cell types or tissues"/>
</dbReference>
<dbReference type="GO" id="GO:0016020">
    <property type="term" value="C:membrane"/>
    <property type="evidence" value="ECO:0007669"/>
    <property type="project" value="UniProtKB-SubCell"/>
</dbReference>
<dbReference type="InterPro" id="IPR032776">
    <property type="entry name" value="CECR6/TMEM121"/>
</dbReference>
<dbReference type="InterPro" id="IPR042314">
    <property type="entry name" value="TMEM121"/>
</dbReference>
<dbReference type="PANTHER" id="PTHR31046">
    <property type="entry name" value="TRANSMEMBRANE PROTEIN 121"/>
    <property type="match status" value="1"/>
</dbReference>
<dbReference type="PANTHER" id="PTHR31046:SF0">
    <property type="entry name" value="TRANSMEMBRANE PROTEIN 121"/>
    <property type="match status" value="1"/>
</dbReference>
<dbReference type="Pfam" id="PF14997">
    <property type="entry name" value="CECR6_TMEM121"/>
    <property type="match status" value="1"/>
</dbReference>
<feature type="chain" id="PRO_0000251246" description="Transmembrane protein 121">
    <location>
        <begin position="1"/>
        <end position="318"/>
    </location>
</feature>
<feature type="transmembrane region" description="Helical" evidence="2">
    <location>
        <begin position="10"/>
        <end position="30"/>
    </location>
</feature>
<feature type="transmembrane region" description="Helical" evidence="2">
    <location>
        <begin position="43"/>
        <end position="63"/>
    </location>
</feature>
<feature type="transmembrane region" description="Helical" evidence="2">
    <location>
        <begin position="74"/>
        <end position="94"/>
    </location>
</feature>
<feature type="transmembrane region" description="Helical" evidence="2">
    <location>
        <begin position="112"/>
        <end position="132"/>
    </location>
</feature>
<feature type="transmembrane region" description="Helical" evidence="2">
    <location>
        <begin position="174"/>
        <end position="194"/>
    </location>
</feature>
<feature type="transmembrane region" description="Helical" evidence="2">
    <location>
        <begin position="214"/>
        <end position="234"/>
    </location>
</feature>
<feature type="region of interest" description="Disordered" evidence="3">
    <location>
        <begin position="278"/>
        <end position="318"/>
    </location>
</feature>
<feature type="compositionally biased region" description="Pro residues" evidence="3">
    <location>
        <begin position="278"/>
        <end position="309"/>
    </location>
</feature>
<comment type="function">
    <text evidence="1">May play a role in MAPK signaling.</text>
</comment>
<comment type="subcellular location">
    <subcellularLocation>
        <location evidence="5">Membrane</location>
        <topology evidence="5">Multi-pass membrane protein</topology>
    </subcellularLocation>
    <text evidence="1">May localize to the plasma membrane.</text>
</comment>
<comment type="developmental stage">
    <text evidence="4">Displays strong neural pattern at 8.5 dpc to 12.5 dpc. Not expressed in the heart.</text>
</comment>
<comment type="similarity">
    <text evidence="5">Belongs to the TMEM121 family.</text>
</comment>
<organism>
    <name type="scientific">Mus musculus</name>
    <name type="common">Mouse</name>
    <dbReference type="NCBI Taxonomy" id="10090"/>
    <lineage>
        <taxon>Eukaryota</taxon>
        <taxon>Metazoa</taxon>
        <taxon>Chordata</taxon>
        <taxon>Craniata</taxon>
        <taxon>Vertebrata</taxon>
        <taxon>Euteleostomi</taxon>
        <taxon>Mammalia</taxon>
        <taxon>Eutheria</taxon>
        <taxon>Euarchontoglires</taxon>
        <taxon>Glires</taxon>
        <taxon>Rodentia</taxon>
        <taxon>Myomorpha</taxon>
        <taxon>Muroidea</taxon>
        <taxon>Muridae</taxon>
        <taxon>Murinae</taxon>
        <taxon>Mus</taxon>
        <taxon>Mus</taxon>
    </lineage>
</organism>
<reference key="1">
    <citation type="journal article" date="2002" name="Mech. Dev.">
        <title>Hole is a novel gene product expressed in the developing heart and brain.</title>
        <authorList>
            <person name="Nesset A.L."/>
            <person name="Bader D.M."/>
        </authorList>
    </citation>
    <scope>NUCLEOTIDE SEQUENCE [MRNA]</scope>
    <scope>DEVELOPMENTAL STAGE</scope>
</reference>
<reference key="2">
    <citation type="journal article" date="2004" name="Genome Res.">
        <title>The status, quality, and expansion of the NIH full-length cDNA project: the Mammalian Gene Collection (MGC).</title>
        <authorList>
            <consortium name="The MGC Project Team"/>
        </authorList>
    </citation>
    <scope>NUCLEOTIDE SEQUENCE [LARGE SCALE MRNA]</scope>
    <source>
        <strain>Czech II</strain>
        <tissue>Eye</tissue>
        <tissue>Mammary tumor</tissue>
    </source>
</reference>
<gene>
    <name type="primary">Tmem121</name>
    <name type="synonym">Hole</name>
</gene>
<protein>
    <recommendedName>
        <fullName>Transmembrane protein 121</fullName>
    </recommendedName>
    <alternativeName>
        <fullName>Protein hole</fullName>
    </alternativeName>
</protein>
<evidence type="ECO:0000250" key="1"/>
<evidence type="ECO:0000255" key="2"/>
<evidence type="ECO:0000256" key="3">
    <source>
        <dbReference type="SAM" id="MobiDB-lite"/>
    </source>
</evidence>
<evidence type="ECO:0000269" key="4">
    <source>
    </source>
</evidence>
<evidence type="ECO:0000305" key="5"/>
<sequence length="318" mass="35684">MVLPPPDRRHVCLTTLVIMGSMAVMDAYLVEQNQGPRKIGVCIIVLVGDVCFLLVLRYVAVWVGAEVRTAKRGYAMILWFLYIFVLEIKLYFIFQNYKAARRGAADPVARKALTLLLSVCVPGLFLLLVALDRMEYVRTFRKREDLRGRLFWVALDLLDLLDMQANLWEPPRTGLPLWAEGLTFFYCYMLLLVLPCVALSEVSMQGEHIAPQKMMLYPVLSLATVNVVAVLARAANMALFRDSRVSAIFVGKNVVALATKACTFLEYRRQVRDFPPPALALELQPPPSQRNSVPPPPPLHGPPVRPHGPSPTRDALDT</sequence>
<keyword id="KW-0472">Membrane</keyword>
<keyword id="KW-1185">Reference proteome</keyword>
<keyword id="KW-0812">Transmembrane</keyword>
<keyword id="KW-1133">Transmembrane helix</keyword>